<name>XYNB_ASPFU</name>
<proteinExistence type="inferred from homology"/>
<comment type="function">
    <text evidence="1">Endo-1,4-beta-xylanase involved in the hydrolysis of xylan, a major structural heterogeneous polysaccharide found in plant biomass representing the second most abundant polysaccharide in the biosphere, after cellulose.</text>
</comment>
<comment type="catalytic activity">
    <reaction>
        <text>Endohydrolysis of (1-&gt;4)-beta-D-xylosidic linkages in xylans.</text>
        <dbReference type="EC" id="3.2.1.8"/>
    </reaction>
</comment>
<comment type="pathway">
    <text>Glycan degradation; xylan degradation.</text>
</comment>
<comment type="subcellular location">
    <subcellularLocation>
        <location evidence="1">Secreted</location>
    </subcellularLocation>
</comment>
<comment type="similarity">
    <text evidence="6">Belongs to the glycosyl hydrolase 11 (cellulase G) family.</text>
</comment>
<organism>
    <name type="scientific">Aspergillus fumigatus (strain ATCC MYA-4609 / CBS 101355 / FGSC A1100 / Af293)</name>
    <name type="common">Neosartorya fumigata</name>
    <dbReference type="NCBI Taxonomy" id="330879"/>
    <lineage>
        <taxon>Eukaryota</taxon>
        <taxon>Fungi</taxon>
        <taxon>Dikarya</taxon>
        <taxon>Ascomycota</taxon>
        <taxon>Pezizomycotina</taxon>
        <taxon>Eurotiomycetes</taxon>
        <taxon>Eurotiomycetidae</taxon>
        <taxon>Eurotiales</taxon>
        <taxon>Aspergillaceae</taxon>
        <taxon>Aspergillus</taxon>
        <taxon>Aspergillus subgen. Fumigati</taxon>
    </lineage>
</organism>
<protein>
    <recommendedName>
        <fullName>Probable endo-1,4-beta-xylanase B</fullName>
        <shortName>Xylanase B</shortName>
        <ecNumber>3.2.1.8</ecNumber>
    </recommendedName>
    <alternativeName>
        <fullName>1,4-beta-D-xylan xylanohydrolase B</fullName>
    </alternativeName>
    <alternativeName>
        <fullName>Endo-1,4-beta-xylanase G1</fullName>
        <shortName>Xylanase G1</shortName>
    </alternativeName>
</protein>
<feature type="signal peptide" evidence="2">
    <location>
        <begin position="1"/>
        <end position="19"/>
    </location>
</feature>
<feature type="chain" id="PRO_0000393168" description="Probable endo-1,4-beta-xylanase B">
    <location>
        <begin position="20"/>
        <end position="221"/>
    </location>
</feature>
<feature type="domain" description="GH11" evidence="3">
    <location>
        <begin position="33"/>
        <end position="221"/>
    </location>
</feature>
<feature type="active site" description="Nucleophile" evidence="4">
    <location>
        <position position="117"/>
    </location>
</feature>
<feature type="active site" description="Proton donor" evidence="5">
    <location>
        <position position="208"/>
    </location>
</feature>
<keyword id="KW-0119">Carbohydrate metabolism</keyword>
<keyword id="KW-0326">Glycosidase</keyword>
<keyword id="KW-0378">Hydrolase</keyword>
<keyword id="KW-0624">Polysaccharide degradation</keyword>
<keyword id="KW-1185">Reference proteome</keyword>
<keyword id="KW-0964">Secreted</keyword>
<keyword id="KW-0732">Signal</keyword>
<keyword id="KW-0858">Xylan degradation</keyword>
<accession>Q4WLV2</accession>
<dbReference type="EC" id="3.2.1.8"/>
<dbReference type="EMBL" id="AAHF01000006">
    <property type="protein sequence ID" value="EAL89062.1"/>
    <property type="molecule type" value="Genomic_DNA"/>
</dbReference>
<dbReference type="RefSeq" id="XP_751100.1">
    <property type="nucleotide sequence ID" value="XM_746007.1"/>
</dbReference>
<dbReference type="SMR" id="Q4WLV2"/>
<dbReference type="STRING" id="330879.Q4WLV2"/>
<dbReference type="EnsemblFungi" id="EAL89062">
    <property type="protein sequence ID" value="EAL89062"/>
    <property type="gene ID" value="AFUA_6G12210"/>
</dbReference>
<dbReference type="GeneID" id="3508405"/>
<dbReference type="KEGG" id="afm:AFUA_6G12210"/>
<dbReference type="VEuPathDB" id="FungiDB:Afu6g12210"/>
<dbReference type="eggNOG" id="ENOG502RXA7">
    <property type="taxonomic scope" value="Eukaryota"/>
</dbReference>
<dbReference type="HOGENOM" id="CLU_052631_0_0_1"/>
<dbReference type="InParanoid" id="Q4WLV2"/>
<dbReference type="OMA" id="VDWTNCG"/>
<dbReference type="OrthoDB" id="2115822at2759"/>
<dbReference type="UniPathway" id="UPA00114"/>
<dbReference type="Proteomes" id="UP000002530">
    <property type="component" value="Chromosome 6"/>
</dbReference>
<dbReference type="GO" id="GO:0005576">
    <property type="term" value="C:extracellular region"/>
    <property type="evidence" value="ECO:0000250"/>
    <property type="project" value="UniProtKB"/>
</dbReference>
<dbReference type="GO" id="GO:0031176">
    <property type="term" value="F:endo-1,4-beta-xylanase activity"/>
    <property type="evidence" value="ECO:0000250"/>
    <property type="project" value="UniProtKB"/>
</dbReference>
<dbReference type="GO" id="GO:0045493">
    <property type="term" value="P:xylan catabolic process"/>
    <property type="evidence" value="ECO:0000250"/>
    <property type="project" value="UniProtKB"/>
</dbReference>
<dbReference type="FunFam" id="2.60.120.180:FF:000001">
    <property type="entry name" value="Endo-1,4-beta-xylanase"/>
    <property type="match status" value="1"/>
</dbReference>
<dbReference type="Gene3D" id="2.60.120.180">
    <property type="match status" value="1"/>
</dbReference>
<dbReference type="InterPro" id="IPR013320">
    <property type="entry name" value="ConA-like_dom_sf"/>
</dbReference>
<dbReference type="InterPro" id="IPR013319">
    <property type="entry name" value="GH11/12"/>
</dbReference>
<dbReference type="InterPro" id="IPR018208">
    <property type="entry name" value="GH11_AS_1"/>
</dbReference>
<dbReference type="InterPro" id="IPR033119">
    <property type="entry name" value="GH11_AS_2"/>
</dbReference>
<dbReference type="InterPro" id="IPR033123">
    <property type="entry name" value="GH11_dom"/>
</dbReference>
<dbReference type="InterPro" id="IPR001137">
    <property type="entry name" value="Glyco_hydro_11"/>
</dbReference>
<dbReference type="PANTHER" id="PTHR46828">
    <property type="entry name" value="ENDO-1,4-BETA-XYLANASE A-RELATED"/>
    <property type="match status" value="1"/>
</dbReference>
<dbReference type="PANTHER" id="PTHR46828:SF2">
    <property type="entry name" value="ENDO-1,4-BETA-XYLANASE A-RELATED"/>
    <property type="match status" value="1"/>
</dbReference>
<dbReference type="Pfam" id="PF00457">
    <property type="entry name" value="Glyco_hydro_11"/>
    <property type="match status" value="1"/>
</dbReference>
<dbReference type="PRINTS" id="PR00911">
    <property type="entry name" value="GLHYDRLASE11"/>
</dbReference>
<dbReference type="SUPFAM" id="SSF49899">
    <property type="entry name" value="Concanavalin A-like lectins/glucanases"/>
    <property type="match status" value="1"/>
</dbReference>
<dbReference type="PROSITE" id="PS00776">
    <property type="entry name" value="GH11_1"/>
    <property type="match status" value="1"/>
</dbReference>
<dbReference type="PROSITE" id="PS00777">
    <property type="entry name" value="GH11_2"/>
    <property type="match status" value="1"/>
</dbReference>
<dbReference type="PROSITE" id="PS51761">
    <property type="entry name" value="GH11_3"/>
    <property type="match status" value="1"/>
</dbReference>
<sequence>MVSFSSLVLAASTVAGVLATPGSEQYVELAKRQLTSSQTGTNNGYYYSFWTDGGGQVTYTNGNGGQYQVDWNNCGNFVAGKGWNPASEKAVTYSGSWQTSGNGYLSVYGWTTSPLVEFYIVESYGSYDPSTGATHLGTVESDGATYNLYKTTRTNAPSIQGTATFDQYWSVRTSHRQSGTVTTKNHFDAWRNAGLQLGNFDYMIVATEGYQSSGSATITVS</sequence>
<evidence type="ECO:0000250" key="1"/>
<evidence type="ECO:0000255" key="2"/>
<evidence type="ECO:0000255" key="3">
    <source>
        <dbReference type="PROSITE-ProRule" id="PRU01097"/>
    </source>
</evidence>
<evidence type="ECO:0000255" key="4">
    <source>
        <dbReference type="PROSITE-ProRule" id="PRU10062"/>
    </source>
</evidence>
<evidence type="ECO:0000255" key="5">
    <source>
        <dbReference type="PROSITE-ProRule" id="PRU10063"/>
    </source>
</evidence>
<evidence type="ECO:0000305" key="6"/>
<gene>
    <name type="primary">xlnB</name>
    <name type="synonym">xynB</name>
    <name type="synonym">xynG1</name>
    <name type="ORF">AFUA_6G12210</name>
</gene>
<reference key="1">
    <citation type="journal article" date="2005" name="Nature">
        <title>Genomic sequence of the pathogenic and allergenic filamentous fungus Aspergillus fumigatus.</title>
        <authorList>
            <person name="Nierman W.C."/>
            <person name="Pain A."/>
            <person name="Anderson M.J."/>
            <person name="Wortman J.R."/>
            <person name="Kim H.S."/>
            <person name="Arroyo J."/>
            <person name="Berriman M."/>
            <person name="Abe K."/>
            <person name="Archer D.B."/>
            <person name="Bermejo C."/>
            <person name="Bennett J.W."/>
            <person name="Bowyer P."/>
            <person name="Chen D."/>
            <person name="Collins M."/>
            <person name="Coulsen R."/>
            <person name="Davies R."/>
            <person name="Dyer P.S."/>
            <person name="Farman M.L."/>
            <person name="Fedorova N."/>
            <person name="Fedorova N.D."/>
            <person name="Feldblyum T.V."/>
            <person name="Fischer R."/>
            <person name="Fosker N."/>
            <person name="Fraser A."/>
            <person name="Garcia J.L."/>
            <person name="Garcia M.J."/>
            <person name="Goble A."/>
            <person name="Goldman G.H."/>
            <person name="Gomi K."/>
            <person name="Griffith-Jones S."/>
            <person name="Gwilliam R."/>
            <person name="Haas B.J."/>
            <person name="Haas H."/>
            <person name="Harris D.E."/>
            <person name="Horiuchi H."/>
            <person name="Huang J."/>
            <person name="Humphray S."/>
            <person name="Jimenez J."/>
            <person name="Keller N."/>
            <person name="Khouri H."/>
            <person name="Kitamoto K."/>
            <person name="Kobayashi T."/>
            <person name="Konzack S."/>
            <person name="Kulkarni R."/>
            <person name="Kumagai T."/>
            <person name="Lafton A."/>
            <person name="Latge J.-P."/>
            <person name="Li W."/>
            <person name="Lord A."/>
            <person name="Lu C."/>
            <person name="Majoros W.H."/>
            <person name="May G.S."/>
            <person name="Miller B.L."/>
            <person name="Mohamoud Y."/>
            <person name="Molina M."/>
            <person name="Monod M."/>
            <person name="Mouyna I."/>
            <person name="Mulligan S."/>
            <person name="Murphy L.D."/>
            <person name="O'Neil S."/>
            <person name="Paulsen I."/>
            <person name="Penalva M.A."/>
            <person name="Pertea M."/>
            <person name="Price C."/>
            <person name="Pritchard B.L."/>
            <person name="Quail M.A."/>
            <person name="Rabbinowitsch E."/>
            <person name="Rawlins N."/>
            <person name="Rajandream M.A."/>
            <person name="Reichard U."/>
            <person name="Renauld H."/>
            <person name="Robson G.D."/>
            <person name="Rodriguez de Cordoba S."/>
            <person name="Rodriguez-Pena J.M."/>
            <person name="Ronning C.M."/>
            <person name="Rutter S."/>
            <person name="Salzberg S.L."/>
            <person name="Sanchez M."/>
            <person name="Sanchez-Ferrero J.C."/>
            <person name="Saunders D."/>
            <person name="Seeger K."/>
            <person name="Squares R."/>
            <person name="Squares S."/>
            <person name="Takeuchi M."/>
            <person name="Tekaia F."/>
            <person name="Turner G."/>
            <person name="Vazquez de Aldana C.R."/>
            <person name="Weidman J."/>
            <person name="White O."/>
            <person name="Woodward J.R."/>
            <person name="Yu J.-H."/>
            <person name="Fraser C.M."/>
            <person name="Galagan J.E."/>
            <person name="Asai K."/>
            <person name="Machida M."/>
            <person name="Hall N."/>
            <person name="Barrell B.G."/>
            <person name="Denning D.W."/>
        </authorList>
    </citation>
    <scope>NUCLEOTIDE SEQUENCE [LARGE SCALE GENOMIC DNA]</scope>
    <source>
        <strain>ATCC MYA-4609 / CBS 101355 / FGSC A1100 / Af293</strain>
    </source>
</reference>